<keyword id="KW-0030">Aminoacyl-tRNA synthetase</keyword>
<keyword id="KW-0067">ATP-binding</keyword>
<keyword id="KW-0963">Cytoplasm</keyword>
<keyword id="KW-0436">Ligase</keyword>
<keyword id="KW-0460">Magnesium</keyword>
<keyword id="KW-0479">Metal-binding</keyword>
<keyword id="KW-0547">Nucleotide-binding</keyword>
<keyword id="KW-0648">Protein biosynthesis</keyword>
<keyword id="KW-1185">Reference proteome</keyword>
<protein>
    <recommendedName>
        <fullName>Lysine--tRNA ligase</fullName>
        <ecNumber>6.1.1.6</ecNumber>
    </recommendedName>
    <alternativeName>
        <fullName>Lysyl-tRNA synthetase</fullName>
        <shortName>LysRS</shortName>
    </alternativeName>
</protein>
<name>SYK_RHIME</name>
<comment type="catalytic activity">
    <reaction>
        <text>tRNA(Lys) + L-lysine + ATP = L-lysyl-tRNA(Lys) + AMP + diphosphate</text>
        <dbReference type="Rhea" id="RHEA:20792"/>
        <dbReference type="Rhea" id="RHEA-COMP:9696"/>
        <dbReference type="Rhea" id="RHEA-COMP:9697"/>
        <dbReference type="ChEBI" id="CHEBI:30616"/>
        <dbReference type="ChEBI" id="CHEBI:32551"/>
        <dbReference type="ChEBI" id="CHEBI:33019"/>
        <dbReference type="ChEBI" id="CHEBI:78442"/>
        <dbReference type="ChEBI" id="CHEBI:78529"/>
        <dbReference type="ChEBI" id="CHEBI:456215"/>
        <dbReference type="EC" id="6.1.1.6"/>
    </reaction>
</comment>
<comment type="cofactor">
    <cofactor evidence="1">
        <name>Mg(2+)</name>
        <dbReference type="ChEBI" id="CHEBI:18420"/>
    </cofactor>
    <text evidence="1">Binds 3 Mg(2+) ions per subunit.</text>
</comment>
<comment type="subunit">
    <text evidence="1">Homodimer.</text>
</comment>
<comment type="subcellular location">
    <subcellularLocation>
        <location evidence="1">Cytoplasm</location>
    </subcellularLocation>
</comment>
<comment type="similarity">
    <text evidence="2">Belongs to the class-II aminoacyl-tRNA synthetase family.</text>
</comment>
<proteinExistence type="inferred from homology"/>
<organism>
    <name type="scientific">Rhizobium meliloti (strain 1021)</name>
    <name type="common">Ensifer meliloti</name>
    <name type="synonym">Sinorhizobium meliloti</name>
    <dbReference type="NCBI Taxonomy" id="266834"/>
    <lineage>
        <taxon>Bacteria</taxon>
        <taxon>Pseudomonadati</taxon>
        <taxon>Pseudomonadota</taxon>
        <taxon>Alphaproteobacteria</taxon>
        <taxon>Hyphomicrobiales</taxon>
        <taxon>Rhizobiaceae</taxon>
        <taxon>Sinorhizobium/Ensifer group</taxon>
        <taxon>Sinorhizobium</taxon>
    </lineage>
</organism>
<feature type="chain" id="PRO_0000152672" description="Lysine--tRNA ligase">
    <location>
        <begin position="1"/>
        <end position="498"/>
    </location>
</feature>
<feature type="binding site" evidence="1">
    <location>
        <position position="407"/>
    </location>
    <ligand>
        <name>Mg(2+)</name>
        <dbReference type="ChEBI" id="CHEBI:18420"/>
        <label>1</label>
    </ligand>
</feature>
<feature type="binding site" evidence="1">
    <location>
        <position position="414"/>
    </location>
    <ligand>
        <name>Mg(2+)</name>
        <dbReference type="ChEBI" id="CHEBI:18420"/>
        <label>1</label>
    </ligand>
</feature>
<feature type="binding site" evidence="1">
    <location>
        <position position="414"/>
    </location>
    <ligand>
        <name>Mg(2+)</name>
        <dbReference type="ChEBI" id="CHEBI:18420"/>
        <label>2</label>
    </ligand>
</feature>
<feature type="sequence conflict" description="In Ref. 1; AAC35210." evidence="2" ref="1">
    <original>P</original>
    <variation>A</variation>
    <location>
        <position position="232"/>
    </location>
</feature>
<feature type="sequence conflict" description="In Ref. 1; AAC35210." evidence="2" ref="1">
    <original>KR</original>
    <variation>NA</variation>
    <location>
        <begin position="237"/>
        <end position="238"/>
    </location>
</feature>
<feature type="sequence conflict" description="In Ref. 1; AAC35210." evidence="2" ref="1">
    <original>VKDATGIDFLA</original>
    <variation>SRTRPESISLP</variation>
    <location>
        <begin position="326"/>
        <end position="336"/>
    </location>
</feature>
<evidence type="ECO:0000250" key="1"/>
<evidence type="ECO:0000305" key="2"/>
<dbReference type="EC" id="6.1.1.6"/>
<dbReference type="EMBL" id="M27221">
    <property type="protein sequence ID" value="AAC35210.1"/>
    <property type="molecule type" value="Genomic_DNA"/>
</dbReference>
<dbReference type="EMBL" id="AL591688">
    <property type="protein sequence ID" value="CAC47483.1"/>
    <property type="molecule type" value="Genomic_DNA"/>
</dbReference>
<dbReference type="RefSeq" id="NP_387010.1">
    <property type="nucleotide sequence ID" value="NC_003047.1"/>
</dbReference>
<dbReference type="RefSeq" id="WP_003528855.1">
    <property type="nucleotide sequence ID" value="NC_003047.1"/>
</dbReference>
<dbReference type="SMR" id="O87821"/>
<dbReference type="EnsemblBacteria" id="CAC47483">
    <property type="protein sequence ID" value="CAC47483"/>
    <property type="gene ID" value="SMc03173"/>
</dbReference>
<dbReference type="GeneID" id="89577332"/>
<dbReference type="KEGG" id="sme:SMc03173"/>
<dbReference type="PATRIC" id="fig|266834.11.peg.4425"/>
<dbReference type="eggNOG" id="COG1190">
    <property type="taxonomic scope" value="Bacteria"/>
</dbReference>
<dbReference type="HOGENOM" id="CLU_008255_6_2_5"/>
<dbReference type="OrthoDB" id="9801152at2"/>
<dbReference type="Proteomes" id="UP000001976">
    <property type="component" value="Chromosome"/>
</dbReference>
<dbReference type="GO" id="GO:0005829">
    <property type="term" value="C:cytosol"/>
    <property type="evidence" value="ECO:0007669"/>
    <property type="project" value="TreeGrafter"/>
</dbReference>
<dbReference type="GO" id="GO:0005524">
    <property type="term" value="F:ATP binding"/>
    <property type="evidence" value="ECO:0007669"/>
    <property type="project" value="UniProtKB-UniRule"/>
</dbReference>
<dbReference type="GO" id="GO:0004824">
    <property type="term" value="F:lysine-tRNA ligase activity"/>
    <property type="evidence" value="ECO:0007669"/>
    <property type="project" value="UniProtKB-UniRule"/>
</dbReference>
<dbReference type="GO" id="GO:0000287">
    <property type="term" value="F:magnesium ion binding"/>
    <property type="evidence" value="ECO:0007669"/>
    <property type="project" value="UniProtKB-UniRule"/>
</dbReference>
<dbReference type="GO" id="GO:0000049">
    <property type="term" value="F:tRNA binding"/>
    <property type="evidence" value="ECO:0007669"/>
    <property type="project" value="TreeGrafter"/>
</dbReference>
<dbReference type="GO" id="GO:0006430">
    <property type="term" value="P:lysyl-tRNA aminoacylation"/>
    <property type="evidence" value="ECO:0007669"/>
    <property type="project" value="UniProtKB-UniRule"/>
</dbReference>
<dbReference type="CDD" id="cd00775">
    <property type="entry name" value="LysRS_core"/>
    <property type="match status" value="1"/>
</dbReference>
<dbReference type="CDD" id="cd04322">
    <property type="entry name" value="LysRS_N"/>
    <property type="match status" value="1"/>
</dbReference>
<dbReference type="Gene3D" id="3.30.930.10">
    <property type="entry name" value="Bira Bifunctional Protein, Domain 2"/>
    <property type="match status" value="1"/>
</dbReference>
<dbReference type="Gene3D" id="2.40.50.140">
    <property type="entry name" value="Nucleic acid-binding proteins"/>
    <property type="match status" value="1"/>
</dbReference>
<dbReference type="HAMAP" id="MF_00252">
    <property type="entry name" value="Lys_tRNA_synth_class2"/>
    <property type="match status" value="1"/>
</dbReference>
<dbReference type="InterPro" id="IPR004364">
    <property type="entry name" value="Aa-tRNA-synt_II"/>
</dbReference>
<dbReference type="InterPro" id="IPR006195">
    <property type="entry name" value="aa-tRNA-synth_II"/>
</dbReference>
<dbReference type="InterPro" id="IPR045864">
    <property type="entry name" value="aa-tRNA-synth_II/BPL/LPL"/>
</dbReference>
<dbReference type="InterPro" id="IPR002313">
    <property type="entry name" value="Lys-tRNA-ligase_II"/>
</dbReference>
<dbReference type="InterPro" id="IPR044136">
    <property type="entry name" value="Lys-tRNA-ligase_II_N"/>
</dbReference>
<dbReference type="InterPro" id="IPR018149">
    <property type="entry name" value="Lys-tRNA-synth_II_C"/>
</dbReference>
<dbReference type="InterPro" id="IPR012340">
    <property type="entry name" value="NA-bd_OB-fold"/>
</dbReference>
<dbReference type="InterPro" id="IPR004365">
    <property type="entry name" value="NA-bd_OB_tRNA"/>
</dbReference>
<dbReference type="NCBIfam" id="TIGR00499">
    <property type="entry name" value="lysS_bact"/>
    <property type="match status" value="1"/>
</dbReference>
<dbReference type="NCBIfam" id="NF001756">
    <property type="entry name" value="PRK00484.1"/>
    <property type="match status" value="1"/>
</dbReference>
<dbReference type="PANTHER" id="PTHR42918:SF15">
    <property type="entry name" value="LYSINE--TRNA LIGASE, CHLOROPLASTIC_MITOCHONDRIAL"/>
    <property type="match status" value="1"/>
</dbReference>
<dbReference type="PANTHER" id="PTHR42918">
    <property type="entry name" value="LYSYL-TRNA SYNTHETASE"/>
    <property type="match status" value="1"/>
</dbReference>
<dbReference type="Pfam" id="PF00152">
    <property type="entry name" value="tRNA-synt_2"/>
    <property type="match status" value="1"/>
</dbReference>
<dbReference type="Pfam" id="PF01336">
    <property type="entry name" value="tRNA_anti-codon"/>
    <property type="match status" value="1"/>
</dbReference>
<dbReference type="PRINTS" id="PR00982">
    <property type="entry name" value="TRNASYNTHLYS"/>
</dbReference>
<dbReference type="SUPFAM" id="SSF55681">
    <property type="entry name" value="Class II aaRS and biotin synthetases"/>
    <property type="match status" value="1"/>
</dbReference>
<dbReference type="SUPFAM" id="SSF50249">
    <property type="entry name" value="Nucleic acid-binding proteins"/>
    <property type="match status" value="1"/>
</dbReference>
<dbReference type="PROSITE" id="PS50862">
    <property type="entry name" value="AA_TRNA_LIGASE_II"/>
    <property type="match status" value="1"/>
</dbReference>
<accession>O87821</accession>
<reference key="1">
    <citation type="journal article" date="1999" name="FEBS Lett.">
        <title>Co-transcription of Rhizobium meliloti lysyl-tRNA synthetase and glutamyl-tRNA synthetase genes.</title>
        <authorList>
            <person name="Pelchat M."/>
            <person name="Gagnon Y."/>
            <person name="Laberge S."/>
            <person name="Lapointe J."/>
        </authorList>
    </citation>
    <scope>NUCLEOTIDE SEQUENCE [GENOMIC DNA]</scope>
    <source>
        <strain>A2</strain>
    </source>
</reference>
<reference key="2">
    <citation type="journal article" date="2001" name="Proc. Natl. Acad. Sci. U.S.A.">
        <title>Analysis of the chromosome sequence of the legume symbiont Sinorhizobium meliloti strain 1021.</title>
        <authorList>
            <person name="Capela D."/>
            <person name="Barloy-Hubler F."/>
            <person name="Gouzy J."/>
            <person name="Bothe G."/>
            <person name="Ampe F."/>
            <person name="Batut J."/>
            <person name="Boistard P."/>
            <person name="Becker A."/>
            <person name="Boutry M."/>
            <person name="Cadieu E."/>
            <person name="Dreano S."/>
            <person name="Gloux S."/>
            <person name="Godrie T."/>
            <person name="Goffeau A."/>
            <person name="Kahn D."/>
            <person name="Kiss E."/>
            <person name="Lelaure V."/>
            <person name="Masuy D."/>
            <person name="Pohl T."/>
            <person name="Portetelle D."/>
            <person name="Puehler A."/>
            <person name="Purnelle B."/>
            <person name="Ramsperger U."/>
            <person name="Renard C."/>
            <person name="Thebault P."/>
            <person name="Vandenbol M."/>
            <person name="Weidner S."/>
            <person name="Galibert F."/>
        </authorList>
    </citation>
    <scope>NUCLEOTIDE SEQUENCE [LARGE SCALE GENOMIC DNA]</scope>
    <source>
        <strain>1021</strain>
    </source>
</reference>
<reference key="3">
    <citation type="journal article" date="2001" name="Science">
        <title>The composite genome of the legume symbiont Sinorhizobium meliloti.</title>
        <authorList>
            <person name="Galibert F."/>
            <person name="Finan T.M."/>
            <person name="Long S.R."/>
            <person name="Puehler A."/>
            <person name="Abola P."/>
            <person name="Ampe F."/>
            <person name="Barloy-Hubler F."/>
            <person name="Barnett M.J."/>
            <person name="Becker A."/>
            <person name="Boistard P."/>
            <person name="Bothe G."/>
            <person name="Boutry M."/>
            <person name="Bowser L."/>
            <person name="Buhrmester J."/>
            <person name="Cadieu E."/>
            <person name="Capela D."/>
            <person name="Chain P."/>
            <person name="Cowie A."/>
            <person name="Davis R.W."/>
            <person name="Dreano S."/>
            <person name="Federspiel N.A."/>
            <person name="Fisher R.F."/>
            <person name="Gloux S."/>
            <person name="Godrie T."/>
            <person name="Goffeau A."/>
            <person name="Golding B."/>
            <person name="Gouzy J."/>
            <person name="Gurjal M."/>
            <person name="Hernandez-Lucas I."/>
            <person name="Hong A."/>
            <person name="Huizar L."/>
            <person name="Hyman R.W."/>
            <person name="Jones T."/>
            <person name="Kahn D."/>
            <person name="Kahn M.L."/>
            <person name="Kalman S."/>
            <person name="Keating D.H."/>
            <person name="Kiss E."/>
            <person name="Komp C."/>
            <person name="Lelaure V."/>
            <person name="Masuy D."/>
            <person name="Palm C."/>
            <person name="Peck M.C."/>
            <person name="Pohl T.M."/>
            <person name="Portetelle D."/>
            <person name="Purnelle B."/>
            <person name="Ramsperger U."/>
            <person name="Surzycki R."/>
            <person name="Thebault P."/>
            <person name="Vandenbol M."/>
            <person name="Vorhoelter F.J."/>
            <person name="Weidner S."/>
            <person name="Wells D.H."/>
            <person name="Wong K."/>
            <person name="Yeh K.-C."/>
            <person name="Batut J."/>
        </authorList>
    </citation>
    <scope>NUCLEOTIDE SEQUENCE [LARGE SCALE GENOMIC DNA]</scope>
    <source>
        <strain>1021</strain>
    </source>
</reference>
<sequence length="498" mass="56336">MTDKTQAAGLSSDATEVRSQKLDLLRQQIGDVYPAHFHRTLTNAELAEKYAGLEPDTESGETVTVAGRVFSSRNSGMFMDLHDASGKIQIFSHKDTAPEEARALLPMIDLGDIIGVTGEVRRTKRGELTVNAKEITMLCKSLLPMPEKYHGLADIETRYRKRYLDIMVNEESKLRFQQRSRIVSSLRRFLEDEGFMEVETPMLQPIYGGATAEPFKTHHNTLKLDMYLRIAPELYLKRILVSGLTDKVFEINRNFRNEGVSTRHNPEFTMMECYWAYADYEDVMGLVERMFETLALAVHGKTEFEFGDKQLSFKGPFPRVSMPAAVKDATGIDFLALKSDEEARQAARDAGVEIEKDATWGEVLAFLFEEKVEATLIQPAHVIHFPKDISPFAKEVPGEPRLVERFETYCNGWEIGNAFSELNDPVEQRARMVEQMEQAHARGEKEKTLDEDFLDAMDQGMPPAGGLGIGVDRLIMLLTNSPSIRDIILFPARRQKAD</sequence>
<gene>
    <name type="primary">lysS</name>
    <name type="ordered locus">R02904</name>
    <name type="ORF">SMc03173</name>
</gene>